<protein>
    <recommendedName>
        <fullName evidence="1">Pseudouridine-5'-phosphate glycosidase</fullName>
        <shortName evidence="1">PsiMP glycosidase</shortName>
        <ecNumber evidence="1">4.2.1.70</ecNumber>
    </recommendedName>
</protein>
<proteinExistence type="inferred from homology"/>
<organism>
    <name type="scientific">Staphylococcus aureus (strain MW2)</name>
    <dbReference type="NCBI Taxonomy" id="196620"/>
    <lineage>
        <taxon>Bacteria</taxon>
        <taxon>Bacillati</taxon>
        <taxon>Bacillota</taxon>
        <taxon>Bacilli</taxon>
        <taxon>Bacillales</taxon>
        <taxon>Staphylococcaceae</taxon>
        <taxon>Staphylococcus</taxon>
    </lineage>
</organism>
<name>PSUG_STAAW</name>
<gene>
    <name evidence="1" type="primary">psuG</name>
    <name type="ordered locus">MW0289</name>
</gene>
<comment type="function">
    <text evidence="1">Catalyzes the reversible cleavage of pseudouridine 5'-phosphate (PsiMP) to ribose 5-phosphate and uracil. Functions biologically in the cleavage direction, as part of a pseudouridine degradation pathway.</text>
</comment>
<comment type="catalytic activity">
    <reaction evidence="1">
        <text>D-ribose 5-phosphate + uracil = psi-UMP + H2O</text>
        <dbReference type="Rhea" id="RHEA:18337"/>
        <dbReference type="ChEBI" id="CHEBI:15377"/>
        <dbReference type="ChEBI" id="CHEBI:17568"/>
        <dbReference type="ChEBI" id="CHEBI:58380"/>
        <dbReference type="ChEBI" id="CHEBI:78346"/>
        <dbReference type="EC" id="4.2.1.70"/>
    </reaction>
</comment>
<comment type="cofactor">
    <cofactor evidence="1">
        <name>Mn(2+)</name>
        <dbReference type="ChEBI" id="CHEBI:29035"/>
    </cofactor>
    <text evidence="1">Binds 1 Mn(2+) ion per subunit.</text>
</comment>
<comment type="subunit">
    <text evidence="1">Homotrimer.</text>
</comment>
<comment type="similarity">
    <text evidence="1">Belongs to the pseudouridine-5'-phosphate glycosidase family.</text>
</comment>
<keyword id="KW-0326">Glycosidase</keyword>
<keyword id="KW-0378">Hydrolase</keyword>
<keyword id="KW-0456">Lyase</keyword>
<keyword id="KW-0464">Manganese</keyword>
<keyword id="KW-0479">Metal-binding</keyword>
<accession>Q8NYD0</accession>
<dbReference type="EC" id="4.2.1.70" evidence="1"/>
<dbReference type="EMBL" id="BA000033">
    <property type="protein sequence ID" value="BAB94154.1"/>
    <property type="molecule type" value="Genomic_DNA"/>
</dbReference>
<dbReference type="RefSeq" id="WP_000002056.1">
    <property type="nucleotide sequence ID" value="NC_003923.1"/>
</dbReference>
<dbReference type="SMR" id="Q8NYD0"/>
<dbReference type="KEGG" id="sam:MW0289"/>
<dbReference type="HOGENOM" id="CLU_012201_0_1_9"/>
<dbReference type="GO" id="GO:0005737">
    <property type="term" value="C:cytoplasm"/>
    <property type="evidence" value="ECO:0007669"/>
    <property type="project" value="TreeGrafter"/>
</dbReference>
<dbReference type="GO" id="GO:0016798">
    <property type="term" value="F:hydrolase activity, acting on glycosyl bonds"/>
    <property type="evidence" value="ECO:0007669"/>
    <property type="project" value="UniProtKB-KW"/>
</dbReference>
<dbReference type="GO" id="GO:0046872">
    <property type="term" value="F:metal ion binding"/>
    <property type="evidence" value="ECO:0007669"/>
    <property type="project" value="UniProtKB-KW"/>
</dbReference>
<dbReference type="GO" id="GO:0004730">
    <property type="term" value="F:pseudouridylate synthase activity"/>
    <property type="evidence" value="ECO:0007669"/>
    <property type="project" value="UniProtKB-UniRule"/>
</dbReference>
<dbReference type="GO" id="GO:0046113">
    <property type="term" value="P:nucleobase catabolic process"/>
    <property type="evidence" value="ECO:0007669"/>
    <property type="project" value="UniProtKB-UniRule"/>
</dbReference>
<dbReference type="Gene3D" id="3.40.1790.10">
    <property type="entry name" value="Indigoidine synthase domain"/>
    <property type="match status" value="1"/>
</dbReference>
<dbReference type="HAMAP" id="MF_01876">
    <property type="entry name" value="PsiMP_glycosidase"/>
    <property type="match status" value="1"/>
</dbReference>
<dbReference type="InterPro" id="IPR022830">
    <property type="entry name" value="Indigdn_synthA-like"/>
</dbReference>
<dbReference type="InterPro" id="IPR007342">
    <property type="entry name" value="PsuG"/>
</dbReference>
<dbReference type="PANTHER" id="PTHR42909:SF1">
    <property type="entry name" value="CARBOHYDRATE KINASE PFKB DOMAIN-CONTAINING PROTEIN"/>
    <property type="match status" value="1"/>
</dbReference>
<dbReference type="PANTHER" id="PTHR42909">
    <property type="entry name" value="ZGC:136858"/>
    <property type="match status" value="1"/>
</dbReference>
<dbReference type="Pfam" id="PF04227">
    <property type="entry name" value="Indigoidine_A"/>
    <property type="match status" value="1"/>
</dbReference>
<dbReference type="SUPFAM" id="SSF110581">
    <property type="entry name" value="Indigoidine synthase A-like"/>
    <property type="match status" value="1"/>
</dbReference>
<reference key="1">
    <citation type="journal article" date="2002" name="Lancet">
        <title>Genome and virulence determinants of high virulence community-acquired MRSA.</title>
        <authorList>
            <person name="Baba T."/>
            <person name="Takeuchi F."/>
            <person name="Kuroda M."/>
            <person name="Yuzawa H."/>
            <person name="Aoki K."/>
            <person name="Oguchi A."/>
            <person name="Nagai Y."/>
            <person name="Iwama N."/>
            <person name="Asano K."/>
            <person name="Naimi T."/>
            <person name="Kuroda H."/>
            <person name="Cui L."/>
            <person name="Yamamoto K."/>
            <person name="Hiramatsu K."/>
        </authorList>
    </citation>
    <scope>NUCLEOTIDE SEQUENCE [LARGE SCALE GENOMIC DNA]</scope>
    <source>
        <strain>MW2</strain>
    </source>
</reference>
<sequence>MANLQKYIEYSREVQQALENNQPIVALESTIISHGMPYPQNVEMATTVEQIIRNNGAIPATIAIIDGKIKIGLESEDLEILATSKDVAKVSRRDLAEVVAMKCVGATTVATTMICAAMAGIQFFVTGGIGGVHKGAEHTMDISADLEELSKTNVTVICAGAKSILDLPKTMEYLETKGVPVIGYQTNELPAFFTRESGVKLTSSVETPERLADIHLTKQQLNLEGGIVVANPIPYEHALSKAYIEAIINEAVVEAENQGIKGKDATPFLLGKIVEKTNGKSLAANIKLVENNAALGAKIAVAVNKLL</sequence>
<feature type="chain" id="PRO_0000390550" description="Pseudouridine-5'-phosphate glycosidase">
    <location>
        <begin position="1"/>
        <end position="307"/>
    </location>
</feature>
<feature type="active site" description="Proton donor" evidence="1">
    <location>
        <position position="28"/>
    </location>
</feature>
<feature type="active site" description="Nucleophile" evidence="1">
    <location>
        <position position="162"/>
    </location>
</feature>
<feature type="binding site" evidence="1">
    <location>
        <position position="89"/>
    </location>
    <ligand>
        <name>substrate</name>
    </ligand>
</feature>
<feature type="binding site" evidence="1">
    <location>
        <position position="109"/>
    </location>
    <ligand>
        <name>substrate</name>
    </ligand>
</feature>
<feature type="binding site" evidence="1">
    <location>
        <position position="141"/>
    </location>
    <ligand>
        <name>Mn(2+)</name>
        <dbReference type="ChEBI" id="CHEBI:29035"/>
    </ligand>
</feature>
<feature type="binding site" evidence="1">
    <location>
        <begin position="143"/>
        <end position="145"/>
    </location>
    <ligand>
        <name>substrate</name>
    </ligand>
</feature>
<evidence type="ECO:0000255" key="1">
    <source>
        <dbReference type="HAMAP-Rule" id="MF_01876"/>
    </source>
</evidence>